<protein>
    <recommendedName>
        <fullName evidence="1">Bifunctional protein HldE</fullName>
    </recommendedName>
    <domain>
        <recommendedName>
            <fullName evidence="1">D-beta-D-heptose 7-phosphate kinase</fullName>
            <ecNumber evidence="1">2.7.1.167</ecNumber>
        </recommendedName>
        <alternativeName>
            <fullName evidence="1">D-beta-D-heptose 7-phosphotransferase</fullName>
        </alternativeName>
        <alternativeName>
            <fullName evidence="1">D-glycero-beta-D-manno-heptose-7-phosphate kinase</fullName>
        </alternativeName>
    </domain>
    <domain>
        <recommendedName>
            <fullName evidence="1">D-beta-D-heptose 1-phosphate adenylyltransferase</fullName>
            <ecNumber evidence="1">2.7.7.70</ecNumber>
        </recommendedName>
        <alternativeName>
            <fullName evidence="1">D-glycero-beta-D-manno-heptose 1-phosphate adenylyltransferase</fullName>
        </alternativeName>
    </domain>
</protein>
<sequence>MKPILPDYNSAGVLIIGDVMLDRYWYGPTGRISPEAPVPVVKVENNEERPGGAANVAMNIASLGGHAHIVGLTGEDEPAKVLTETLSALNVKCDFVALPDYPTITKLRVMSRGQQLIRLDFEDKFENTDATPVLSRMDAALPNVKAVIMSDYAKGSLEHVQAYIQKARAANIPVFIDPKGADFERYRGATLLTPNMKEFEDVVGKVKSDQELVEKALALVKEFDFEALLVTRSEHGMTLIRRGQEPFHLPTQAKEVYDVTGAGDTVISVLAASVAAGKSFEEACALANAAAGVVVGKLGTSTLSEIELAEAVHGSQDTDFGVISEKALIEAVKKARARGEKVVMTNGCFDILHAGHVSYLNHAAELGDRLIVAVNTDESVKRLKGPGRPVNPTDRRMAVLAGLGAVDWVVPFSEDTPQRLISEVLPSMLVKGGDYKPEEIAGGKEVIAAGGEVRVLNFEDGCSTSEIINAIKGGKG</sequence>
<accession>Q87SJ9</accession>
<feature type="chain" id="PRO_0000080129" description="Bifunctional protein HldE">
    <location>
        <begin position="1"/>
        <end position="476"/>
    </location>
</feature>
<feature type="region of interest" description="Ribokinase">
    <location>
        <begin position="1"/>
        <end position="318"/>
    </location>
</feature>
<feature type="region of interest" description="Cytidylyltransferase">
    <location>
        <begin position="344"/>
        <end position="476"/>
    </location>
</feature>
<feature type="active site" evidence="1">
    <location>
        <position position="264"/>
    </location>
</feature>
<feature type="binding site" evidence="1">
    <location>
        <begin position="195"/>
        <end position="198"/>
    </location>
    <ligand>
        <name>ATP</name>
        <dbReference type="ChEBI" id="CHEBI:30616"/>
    </ligand>
</feature>
<gene>
    <name evidence="1" type="primary">hldE</name>
    <name type="synonym">rfaE</name>
    <name type="ordered locus">VP0424</name>
</gene>
<keyword id="KW-0067">ATP-binding</keyword>
<keyword id="KW-0119">Carbohydrate metabolism</keyword>
<keyword id="KW-0418">Kinase</keyword>
<keyword id="KW-0448">Lipopolysaccharide biosynthesis</keyword>
<keyword id="KW-0511">Multifunctional enzyme</keyword>
<keyword id="KW-0547">Nucleotide-binding</keyword>
<keyword id="KW-0548">Nucleotidyltransferase</keyword>
<keyword id="KW-0808">Transferase</keyword>
<comment type="function">
    <text evidence="1">Catalyzes the phosphorylation of D-glycero-D-manno-heptose 7-phosphate at the C-1 position to selectively form D-glycero-beta-D-manno-heptose-1,7-bisphosphate.</text>
</comment>
<comment type="function">
    <text evidence="1">Catalyzes the ADP transfer from ATP to D-glycero-beta-D-manno-heptose 1-phosphate, yielding ADP-D-glycero-beta-D-manno-heptose.</text>
</comment>
<comment type="catalytic activity">
    <reaction evidence="1">
        <text>D-glycero-beta-D-manno-heptose 7-phosphate + ATP = D-glycero-beta-D-manno-heptose 1,7-bisphosphate + ADP + H(+)</text>
        <dbReference type="Rhea" id="RHEA:27473"/>
        <dbReference type="ChEBI" id="CHEBI:15378"/>
        <dbReference type="ChEBI" id="CHEBI:30616"/>
        <dbReference type="ChEBI" id="CHEBI:60204"/>
        <dbReference type="ChEBI" id="CHEBI:60208"/>
        <dbReference type="ChEBI" id="CHEBI:456216"/>
        <dbReference type="EC" id="2.7.1.167"/>
    </reaction>
</comment>
<comment type="catalytic activity">
    <reaction evidence="1">
        <text>D-glycero-beta-D-manno-heptose 1-phosphate + ATP + H(+) = ADP-D-glycero-beta-D-manno-heptose + diphosphate</text>
        <dbReference type="Rhea" id="RHEA:27465"/>
        <dbReference type="ChEBI" id="CHEBI:15378"/>
        <dbReference type="ChEBI" id="CHEBI:30616"/>
        <dbReference type="ChEBI" id="CHEBI:33019"/>
        <dbReference type="ChEBI" id="CHEBI:59967"/>
        <dbReference type="ChEBI" id="CHEBI:61593"/>
        <dbReference type="EC" id="2.7.7.70"/>
    </reaction>
</comment>
<comment type="pathway">
    <text evidence="1">Nucleotide-sugar biosynthesis; ADP-L-glycero-beta-D-manno-heptose biosynthesis; ADP-L-glycero-beta-D-manno-heptose from D-glycero-beta-D-manno-heptose 7-phosphate: step 1/4.</text>
</comment>
<comment type="pathway">
    <text evidence="1">Nucleotide-sugar biosynthesis; ADP-L-glycero-beta-D-manno-heptose biosynthesis; ADP-L-glycero-beta-D-manno-heptose from D-glycero-beta-D-manno-heptose 7-phosphate: step 3/4.</text>
</comment>
<comment type="pathway">
    <text>Bacterial outer membrane biogenesis; LPS core biosynthesis.</text>
</comment>
<comment type="subunit">
    <text evidence="1">Homodimer.</text>
</comment>
<comment type="similarity">
    <text evidence="1">In the N-terminal section; belongs to the carbohydrate kinase PfkB family.</text>
</comment>
<comment type="similarity">
    <text evidence="1">In the C-terminal section; belongs to the cytidylyltransferase family.</text>
</comment>
<name>HLDE_VIBPA</name>
<dbReference type="EC" id="2.7.1.167" evidence="1"/>
<dbReference type="EC" id="2.7.7.70" evidence="1"/>
<dbReference type="EMBL" id="BA000031">
    <property type="protein sequence ID" value="BAC58687.1"/>
    <property type="molecule type" value="Genomic_DNA"/>
</dbReference>
<dbReference type="RefSeq" id="NP_796803.1">
    <property type="nucleotide sequence ID" value="NC_004603.1"/>
</dbReference>
<dbReference type="RefSeq" id="WP_005455449.1">
    <property type="nucleotide sequence ID" value="NC_004603.1"/>
</dbReference>
<dbReference type="SMR" id="Q87SJ9"/>
<dbReference type="GeneID" id="1187892"/>
<dbReference type="KEGG" id="vpa:VP0424"/>
<dbReference type="PATRIC" id="fig|223926.6.peg.403"/>
<dbReference type="eggNOG" id="COG0615">
    <property type="taxonomic scope" value="Bacteria"/>
</dbReference>
<dbReference type="eggNOG" id="COG2870">
    <property type="taxonomic scope" value="Bacteria"/>
</dbReference>
<dbReference type="HOGENOM" id="CLU_021150_2_1_6"/>
<dbReference type="UniPathway" id="UPA00356">
    <property type="reaction ID" value="UER00437"/>
</dbReference>
<dbReference type="UniPathway" id="UPA00356">
    <property type="reaction ID" value="UER00439"/>
</dbReference>
<dbReference type="UniPathway" id="UPA00958"/>
<dbReference type="Proteomes" id="UP000002493">
    <property type="component" value="Chromosome 1"/>
</dbReference>
<dbReference type="GO" id="GO:0005829">
    <property type="term" value="C:cytosol"/>
    <property type="evidence" value="ECO:0007669"/>
    <property type="project" value="TreeGrafter"/>
</dbReference>
<dbReference type="GO" id="GO:0005524">
    <property type="term" value="F:ATP binding"/>
    <property type="evidence" value="ECO:0007669"/>
    <property type="project" value="UniProtKB-UniRule"/>
</dbReference>
<dbReference type="GO" id="GO:0033785">
    <property type="term" value="F:heptose 7-phosphate kinase activity"/>
    <property type="evidence" value="ECO:0007669"/>
    <property type="project" value="UniProtKB-UniRule"/>
</dbReference>
<dbReference type="GO" id="GO:0033786">
    <property type="term" value="F:heptose-1-phosphate adenylyltransferase activity"/>
    <property type="evidence" value="ECO:0007669"/>
    <property type="project" value="UniProtKB-UniRule"/>
</dbReference>
<dbReference type="GO" id="GO:0016773">
    <property type="term" value="F:phosphotransferase activity, alcohol group as acceptor"/>
    <property type="evidence" value="ECO:0007669"/>
    <property type="project" value="InterPro"/>
</dbReference>
<dbReference type="GO" id="GO:0097171">
    <property type="term" value="P:ADP-L-glycero-beta-D-manno-heptose biosynthetic process"/>
    <property type="evidence" value="ECO:0007669"/>
    <property type="project" value="UniProtKB-UniPathway"/>
</dbReference>
<dbReference type="GO" id="GO:0009244">
    <property type="term" value="P:lipopolysaccharide core region biosynthetic process"/>
    <property type="evidence" value="ECO:0007669"/>
    <property type="project" value="UniProtKB-UniPathway"/>
</dbReference>
<dbReference type="CDD" id="cd01172">
    <property type="entry name" value="RfaE_like"/>
    <property type="match status" value="1"/>
</dbReference>
<dbReference type="FunFam" id="3.40.1190.20:FF:000002">
    <property type="entry name" value="Bifunctional protein HldE"/>
    <property type="match status" value="1"/>
</dbReference>
<dbReference type="FunFam" id="3.40.50.620:FF:000028">
    <property type="entry name" value="Bifunctional protein HldE"/>
    <property type="match status" value="1"/>
</dbReference>
<dbReference type="Gene3D" id="3.40.1190.20">
    <property type="match status" value="1"/>
</dbReference>
<dbReference type="Gene3D" id="3.40.50.620">
    <property type="entry name" value="HUPs"/>
    <property type="match status" value="1"/>
</dbReference>
<dbReference type="HAMAP" id="MF_01603">
    <property type="entry name" value="HldE"/>
    <property type="match status" value="1"/>
</dbReference>
<dbReference type="InterPro" id="IPR023030">
    <property type="entry name" value="Bifunc_HldE"/>
</dbReference>
<dbReference type="InterPro" id="IPR002173">
    <property type="entry name" value="Carboh/pur_kinase_PfkB_CS"/>
</dbReference>
<dbReference type="InterPro" id="IPR004821">
    <property type="entry name" value="Cyt_trans-like"/>
</dbReference>
<dbReference type="InterPro" id="IPR011611">
    <property type="entry name" value="PfkB_dom"/>
</dbReference>
<dbReference type="InterPro" id="IPR011913">
    <property type="entry name" value="RfaE_dom_I"/>
</dbReference>
<dbReference type="InterPro" id="IPR011914">
    <property type="entry name" value="RfaE_dom_II"/>
</dbReference>
<dbReference type="InterPro" id="IPR029056">
    <property type="entry name" value="Ribokinase-like"/>
</dbReference>
<dbReference type="InterPro" id="IPR014729">
    <property type="entry name" value="Rossmann-like_a/b/a_fold"/>
</dbReference>
<dbReference type="NCBIfam" id="TIGR00125">
    <property type="entry name" value="cyt_tran_rel"/>
    <property type="match status" value="1"/>
</dbReference>
<dbReference type="NCBIfam" id="NF008454">
    <property type="entry name" value="PRK11316.1"/>
    <property type="match status" value="1"/>
</dbReference>
<dbReference type="NCBIfam" id="TIGR02198">
    <property type="entry name" value="rfaE_dom_I"/>
    <property type="match status" value="1"/>
</dbReference>
<dbReference type="NCBIfam" id="TIGR02199">
    <property type="entry name" value="rfaE_dom_II"/>
    <property type="match status" value="1"/>
</dbReference>
<dbReference type="PANTHER" id="PTHR46969">
    <property type="entry name" value="BIFUNCTIONAL PROTEIN HLDE"/>
    <property type="match status" value="1"/>
</dbReference>
<dbReference type="PANTHER" id="PTHR46969:SF1">
    <property type="entry name" value="BIFUNCTIONAL PROTEIN HLDE"/>
    <property type="match status" value="1"/>
</dbReference>
<dbReference type="Pfam" id="PF01467">
    <property type="entry name" value="CTP_transf_like"/>
    <property type="match status" value="1"/>
</dbReference>
<dbReference type="Pfam" id="PF00294">
    <property type="entry name" value="PfkB"/>
    <property type="match status" value="1"/>
</dbReference>
<dbReference type="SUPFAM" id="SSF52374">
    <property type="entry name" value="Nucleotidylyl transferase"/>
    <property type="match status" value="1"/>
</dbReference>
<dbReference type="SUPFAM" id="SSF53613">
    <property type="entry name" value="Ribokinase-like"/>
    <property type="match status" value="1"/>
</dbReference>
<dbReference type="PROSITE" id="PS00583">
    <property type="entry name" value="PFKB_KINASES_1"/>
    <property type="match status" value="1"/>
</dbReference>
<reference key="1">
    <citation type="journal article" date="2003" name="Lancet">
        <title>Genome sequence of Vibrio parahaemolyticus: a pathogenic mechanism distinct from that of V. cholerae.</title>
        <authorList>
            <person name="Makino K."/>
            <person name="Oshima K."/>
            <person name="Kurokawa K."/>
            <person name="Yokoyama K."/>
            <person name="Uda T."/>
            <person name="Tagomori K."/>
            <person name="Iijima Y."/>
            <person name="Najima M."/>
            <person name="Nakano M."/>
            <person name="Yamashita A."/>
            <person name="Kubota Y."/>
            <person name="Kimura S."/>
            <person name="Yasunaga T."/>
            <person name="Honda T."/>
            <person name="Shinagawa H."/>
            <person name="Hattori M."/>
            <person name="Iida T."/>
        </authorList>
    </citation>
    <scope>NUCLEOTIDE SEQUENCE [LARGE SCALE GENOMIC DNA]</scope>
    <source>
        <strain>RIMD 2210633</strain>
    </source>
</reference>
<organism>
    <name type="scientific">Vibrio parahaemolyticus serotype O3:K6 (strain RIMD 2210633)</name>
    <dbReference type="NCBI Taxonomy" id="223926"/>
    <lineage>
        <taxon>Bacteria</taxon>
        <taxon>Pseudomonadati</taxon>
        <taxon>Pseudomonadota</taxon>
        <taxon>Gammaproteobacteria</taxon>
        <taxon>Vibrionales</taxon>
        <taxon>Vibrionaceae</taxon>
        <taxon>Vibrio</taxon>
    </lineage>
</organism>
<evidence type="ECO:0000255" key="1">
    <source>
        <dbReference type="HAMAP-Rule" id="MF_01603"/>
    </source>
</evidence>
<proteinExistence type="inferred from homology"/>